<protein>
    <recommendedName>
        <fullName>High mobility group protein B4</fullName>
    </recommendedName>
</protein>
<evidence type="ECO:0000255" key="1">
    <source>
        <dbReference type="PROSITE-ProRule" id="PRU00267"/>
    </source>
</evidence>
<evidence type="ECO:0000256" key="2">
    <source>
        <dbReference type="SAM" id="MobiDB-lite"/>
    </source>
</evidence>
<evidence type="ECO:0000269" key="3">
    <source>
    </source>
</evidence>
<evidence type="ECO:0000305" key="4"/>
<proteinExistence type="evidence at protein level"/>
<dbReference type="EMBL" id="AK005588">
    <property type="protein sequence ID" value="BAB24141.1"/>
    <property type="molecule type" value="mRNA"/>
</dbReference>
<dbReference type="EMBL" id="BC061030">
    <property type="protein sequence ID" value="AAH61030.1"/>
    <property type="molecule type" value="mRNA"/>
</dbReference>
<dbReference type="CCDS" id="CCDS18671.1"/>
<dbReference type="RefSeq" id="NP_081312.2">
    <property type="nucleotide sequence ID" value="NM_027036.3"/>
</dbReference>
<dbReference type="SMR" id="Q6P8W9"/>
<dbReference type="FunCoup" id="Q6P8W9">
    <property type="interactions" value="1"/>
</dbReference>
<dbReference type="STRING" id="10090.ENSMUSP00000059625"/>
<dbReference type="PhosphoSitePlus" id="Q6P8W9"/>
<dbReference type="PaxDb" id="10090-ENSMUSP00000059625"/>
<dbReference type="ProteomicsDB" id="267053"/>
<dbReference type="Antibodypedia" id="17205">
    <property type="antibodies" value="253 antibodies from 28 providers"/>
</dbReference>
<dbReference type="DNASU" id="69317"/>
<dbReference type="Ensembl" id="ENSMUST00000053830.5">
    <property type="protein sequence ID" value="ENSMUSP00000059625.4"/>
    <property type="gene ID" value="ENSMUSG00000048686.5"/>
</dbReference>
<dbReference type="GeneID" id="69317"/>
<dbReference type="KEGG" id="mmu:69317"/>
<dbReference type="UCSC" id="uc008uva.1">
    <property type="organism name" value="mouse"/>
</dbReference>
<dbReference type="AGR" id="MGI:1916567"/>
<dbReference type="CTD" id="127540"/>
<dbReference type="MGI" id="MGI:1916567">
    <property type="gene designation" value="Hmgb4"/>
</dbReference>
<dbReference type="VEuPathDB" id="HostDB:ENSMUSG00000048686"/>
<dbReference type="eggNOG" id="KOG0381">
    <property type="taxonomic scope" value="Eukaryota"/>
</dbReference>
<dbReference type="GeneTree" id="ENSGT00940000162735"/>
<dbReference type="HOGENOM" id="CLU_082854_0_4_1"/>
<dbReference type="InParanoid" id="Q6P8W9"/>
<dbReference type="OMA" id="MWSAKTD"/>
<dbReference type="OrthoDB" id="1919336at2759"/>
<dbReference type="PhylomeDB" id="Q6P8W9"/>
<dbReference type="TreeFam" id="TF105371"/>
<dbReference type="BioGRID-ORCS" id="69317">
    <property type="hits" value="3 hits in 75 CRISPR screens"/>
</dbReference>
<dbReference type="ChiTaRS" id="Hmgb4">
    <property type="organism name" value="mouse"/>
</dbReference>
<dbReference type="PRO" id="PR:Q6P8W9"/>
<dbReference type="Proteomes" id="UP000000589">
    <property type="component" value="Chromosome 4"/>
</dbReference>
<dbReference type="RNAct" id="Q6P8W9">
    <property type="molecule type" value="protein"/>
</dbReference>
<dbReference type="Bgee" id="ENSMUSG00000048686">
    <property type="expression patterns" value="Expressed in seminiferous tubule of testis and 13 other cell types or tissues"/>
</dbReference>
<dbReference type="GO" id="GO:0005694">
    <property type="term" value="C:chromosome"/>
    <property type="evidence" value="ECO:0007669"/>
    <property type="project" value="UniProtKB-SubCell"/>
</dbReference>
<dbReference type="GO" id="GO:0005634">
    <property type="term" value="C:nucleus"/>
    <property type="evidence" value="ECO:0007669"/>
    <property type="project" value="UniProtKB-SubCell"/>
</dbReference>
<dbReference type="GO" id="GO:0003677">
    <property type="term" value="F:DNA binding"/>
    <property type="evidence" value="ECO:0007669"/>
    <property type="project" value="UniProtKB-KW"/>
</dbReference>
<dbReference type="CDD" id="cd21978">
    <property type="entry name" value="HMG-box_HMGB_rpt1"/>
    <property type="match status" value="1"/>
</dbReference>
<dbReference type="CDD" id="cd21979">
    <property type="entry name" value="HMG-box_HMGB_rpt2"/>
    <property type="match status" value="1"/>
</dbReference>
<dbReference type="FunFam" id="1.10.30.10:FF:000038">
    <property type="entry name" value="High mobility group box 4"/>
    <property type="match status" value="1"/>
</dbReference>
<dbReference type="FunFam" id="1.10.30.10:FF:000046">
    <property type="entry name" value="High mobility group box 4"/>
    <property type="match status" value="1"/>
</dbReference>
<dbReference type="Gene3D" id="1.10.30.10">
    <property type="entry name" value="High mobility group box domain"/>
    <property type="match status" value="2"/>
</dbReference>
<dbReference type="InterPro" id="IPR009071">
    <property type="entry name" value="HMG_box_dom"/>
</dbReference>
<dbReference type="InterPro" id="IPR036910">
    <property type="entry name" value="HMG_box_dom_sf"/>
</dbReference>
<dbReference type="InterPro" id="IPR050342">
    <property type="entry name" value="HMGB"/>
</dbReference>
<dbReference type="PANTHER" id="PTHR48112:SF7">
    <property type="entry name" value="HIGH MOBILITY GROUP PROTEIN B4"/>
    <property type="match status" value="1"/>
</dbReference>
<dbReference type="PANTHER" id="PTHR48112">
    <property type="entry name" value="HIGH MOBILITY GROUP PROTEIN DSP1"/>
    <property type="match status" value="1"/>
</dbReference>
<dbReference type="Pfam" id="PF00505">
    <property type="entry name" value="HMG_box"/>
    <property type="match status" value="1"/>
</dbReference>
<dbReference type="Pfam" id="PF09011">
    <property type="entry name" value="HMG_box_2"/>
    <property type="match status" value="1"/>
</dbReference>
<dbReference type="PRINTS" id="PR00886">
    <property type="entry name" value="HIGHMOBLTY12"/>
</dbReference>
<dbReference type="SMART" id="SM00398">
    <property type="entry name" value="HMG"/>
    <property type="match status" value="2"/>
</dbReference>
<dbReference type="SUPFAM" id="SSF47095">
    <property type="entry name" value="HMG-box"/>
    <property type="match status" value="2"/>
</dbReference>
<dbReference type="PROSITE" id="PS50118">
    <property type="entry name" value="HMG_BOX_2"/>
    <property type="match status" value="2"/>
</dbReference>
<comment type="subcellular location">
    <subcellularLocation>
        <location evidence="3">Nucleus</location>
    </subcellularLocation>
    <subcellularLocation>
        <location evidence="3">Chromosome</location>
    </subcellularLocation>
    <text evidence="3">Interacts specifically with the sex chromosomes.</text>
</comment>
<comment type="tissue specificity">
    <text evidence="3">Expressed in adult germ cells (at protein level).</text>
</comment>
<comment type="developmental stage">
    <text evidence="3">Strongly expressed in adult germ cells and weakly expressed embryonic gonads (PubMed:25609838). In meiotic germ cells, begins to accumulate during the leptotene stage, before its concentration increases further during the pachytene and diplotene stages, where it localizes to the sex body (PubMed:25609838).</text>
</comment>
<comment type="similarity">
    <text evidence="4">Belongs to the HMGB family.</text>
</comment>
<name>HMGB4_MOUSE</name>
<sequence>MGEKDQLRPKVNVSSYIHFMLNFRNKFKEQQPNTYLGFKEFSRKCSEKWRSISKHEKAKYEALAELDKARYQQEMMNYIGKRRKRRKRDPKAPRKPPSSFLLFSRDHYAMLKQENPDWTVVQVAKAAGKMWSTTDEAEKKPYEQKAALMRAKYFEEQEAYRNQCQGRKGNFLESAKTSLKQ</sequence>
<reference key="1">
    <citation type="journal article" date="2005" name="Science">
        <title>The transcriptional landscape of the mammalian genome.</title>
        <authorList>
            <person name="Carninci P."/>
            <person name="Kasukawa T."/>
            <person name="Katayama S."/>
            <person name="Gough J."/>
            <person name="Frith M.C."/>
            <person name="Maeda N."/>
            <person name="Oyama R."/>
            <person name="Ravasi T."/>
            <person name="Lenhard B."/>
            <person name="Wells C."/>
            <person name="Kodzius R."/>
            <person name="Shimokawa K."/>
            <person name="Bajic V.B."/>
            <person name="Brenner S.E."/>
            <person name="Batalov S."/>
            <person name="Forrest A.R."/>
            <person name="Zavolan M."/>
            <person name="Davis M.J."/>
            <person name="Wilming L.G."/>
            <person name="Aidinis V."/>
            <person name="Allen J.E."/>
            <person name="Ambesi-Impiombato A."/>
            <person name="Apweiler R."/>
            <person name="Aturaliya R.N."/>
            <person name="Bailey T.L."/>
            <person name="Bansal M."/>
            <person name="Baxter L."/>
            <person name="Beisel K.W."/>
            <person name="Bersano T."/>
            <person name="Bono H."/>
            <person name="Chalk A.M."/>
            <person name="Chiu K.P."/>
            <person name="Choudhary V."/>
            <person name="Christoffels A."/>
            <person name="Clutterbuck D.R."/>
            <person name="Crowe M.L."/>
            <person name="Dalla E."/>
            <person name="Dalrymple B.P."/>
            <person name="de Bono B."/>
            <person name="Della Gatta G."/>
            <person name="di Bernardo D."/>
            <person name="Down T."/>
            <person name="Engstrom P."/>
            <person name="Fagiolini M."/>
            <person name="Faulkner G."/>
            <person name="Fletcher C.F."/>
            <person name="Fukushima T."/>
            <person name="Furuno M."/>
            <person name="Futaki S."/>
            <person name="Gariboldi M."/>
            <person name="Georgii-Hemming P."/>
            <person name="Gingeras T.R."/>
            <person name="Gojobori T."/>
            <person name="Green R.E."/>
            <person name="Gustincich S."/>
            <person name="Harbers M."/>
            <person name="Hayashi Y."/>
            <person name="Hensch T.K."/>
            <person name="Hirokawa N."/>
            <person name="Hill D."/>
            <person name="Huminiecki L."/>
            <person name="Iacono M."/>
            <person name="Ikeo K."/>
            <person name="Iwama A."/>
            <person name="Ishikawa T."/>
            <person name="Jakt M."/>
            <person name="Kanapin A."/>
            <person name="Katoh M."/>
            <person name="Kawasawa Y."/>
            <person name="Kelso J."/>
            <person name="Kitamura H."/>
            <person name="Kitano H."/>
            <person name="Kollias G."/>
            <person name="Krishnan S.P."/>
            <person name="Kruger A."/>
            <person name="Kummerfeld S.K."/>
            <person name="Kurochkin I.V."/>
            <person name="Lareau L.F."/>
            <person name="Lazarevic D."/>
            <person name="Lipovich L."/>
            <person name="Liu J."/>
            <person name="Liuni S."/>
            <person name="McWilliam S."/>
            <person name="Madan Babu M."/>
            <person name="Madera M."/>
            <person name="Marchionni L."/>
            <person name="Matsuda H."/>
            <person name="Matsuzawa S."/>
            <person name="Miki H."/>
            <person name="Mignone F."/>
            <person name="Miyake S."/>
            <person name="Morris K."/>
            <person name="Mottagui-Tabar S."/>
            <person name="Mulder N."/>
            <person name="Nakano N."/>
            <person name="Nakauchi H."/>
            <person name="Ng P."/>
            <person name="Nilsson R."/>
            <person name="Nishiguchi S."/>
            <person name="Nishikawa S."/>
            <person name="Nori F."/>
            <person name="Ohara O."/>
            <person name="Okazaki Y."/>
            <person name="Orlando V."/>
            <person name="Pang K.C."/>
            <person name="Pavan W.J."/>
            <person name="Pavesi G."/>
            <person name="Pesole G."/>
            <person name="Petrovsky N."/>
            <person name="Piazza S."/>
            <person name="Reed J."/>
            <person name="Reid J.F."/>
            <person name="Ring B.Z."/>
            <person name="Ringwald M."/>
            <person name="Rost B."/>
            <person name="Ruan Y."/>
            <person name="Salzberg S.L."/>
            <person name="Sandelin A."/>
            <person name="Schneider C."/>
            <person name="Schoenbach C."/>
            <person name="Sekiguchi K."/>
            <person name="Semple C.A."/>
            <person name="Seno S."/>
            <person name="Sessa L."/>
            <person name="Sheng Y."/>
            <person name="Shibata Y."/>
            <person name="Shimada H."/>
            <person name="Shimada K."/>
            <person name="Silva D."/>
            <person name="Sinclair B."/>
            <person name="Sperling S."/>
            <person name="Stupka E."/>
            <person name="Sugiura K."/>
            <person name="Sultana R."/>
            <person name="Takenaka Y."/>
            <person name="Taki K."/>
            <person name="Tammoja K."/>
            <person name="Tan S.L."/>
            <person name="Tang S."/>
            <person name="Taylor M.S."/>
            <person name="Tegner J."/>
            <person name="Teichmann S.A."/>
            <person name="Ueda H.R."/>
            <person name="van Nimwegen E."/>
            <person name="Verardo R."/>
            <person name="Wei C.L."/>
            <person name="Yagi K."/>
            <person name="Yamanishi H."/>
            <person name="Zabarovsky E."/>
            <person name="Zhu S."/>
            <person name="Zimmer A."/>
            <person name="Hide W."/>
            <person name="Bult C."/>
            <person name="Grimmond S.M."/>
            <person name="Teasdale R.D."/>
            <person name="Liu E.T."/>
            <person name="Brusic V."/>
            <person name="Quackenbush J."/>
            <person name="Wahlestedt C."/>
            <person name="Mattick J.S."/>
            <person name="Hume D.A."/>
            <person name="Kai C."/>
            <person name="Sasaki D."/>
            <person name="Tomaru Y."/>
            <person name="Fukuda S."/>
            <person name="Kanamori-Katayama M."/>
            <person name="Suzuki M."/>
            <person name="Aoki J."/>
            <person name="Arakawa T."/>
            <person name="Iida J."/>
            <person name="Imamura K."/>
            <person name="Itoh M."/>
            <person name="Kato T."/>
            <person name="Kawaji H."/>
            <person name="Kawagashira N."/>
            <person name="Kawashima T."/>
            <person name="Kojima M."/>
            <person name="Kondo S."/>
            <person name="Konno H."/>
            <person name="Nakano K."/>
            <person name="Ninomiya N."/>
            <person name="Nishio T."/>
            <person name="Okada M."/>
            <person name="Plessy C."/>
            <person name="Shibata K."/>
            <person name="Shiraki T."/>
            <person name="Suzuki S."/>
            <person name="Tagami M."/>
            <person name="Waki K."/>
            <person name="Watahiki A."/>
            <person name="Okamura-Oho Y."/>
            <person name="Suzuki H."/>
            <person name="Kawai J."/>
            <person name="Hayashizaki Y."/>
        </authorList>
    </citation>
    <scope>NUCLEOTIDE SEQUENCE [LARGE SCALE MRNA]</scope>
    <source>
        <strain>C57BL/6J</strain>
        <tissue>Testis</tissue>
    </source>
</reference>
<reference key="2">
    <citation type="journal article" date="2004" name="Genome Res.">
        <title>The status, quality, and expansion of the NIH full-length cDNA project: the Mammalian Gene Collection (MGC).</title>
        <authorList>
            <consortium name="The MGC Project Team"/>
        </authorList>
    </citation>
    <scope>NUCLEOTIDE SEQUENCE [LARGE SCALE MRNA]</scope>
    <source>
        <tissue>Testis</tissue>
    </source>
</reference>
<reference key="3">
    <citation type="journal article" date="2015" name="Biol. Reprod.">
        <title>Combining RNA and protein profiling data with network interactions identifies genes associated with spermatogenesis in mouse and human.</title>
        <authorList>
            <person name="Petit F.G."/>
            <person name="Kervarrec C."/>
            <person name="Jamin S.P."/>
            <person name="Smagulova F."/>
            <person name="Hao C."/>
            <person name="Becker E."/>
            <person name="Jegou B."/>
            <person name="Chalmel F."/>
            <person name="Primig M."/>
        </authorList>
    </citation>
    <scope>TISSUE SPECIFICITY</scope>
    <scope>DEVELOPMENTAL STAGE</scope>
    <scope>SUBCELLULAR LOCATION</scope>
</reference>
<feature type="chain" id="PRO_0000269181" description="High mobility group protein B4">
    <location>
        <begin position="1"/>
        <end position="181"/>
    </location>
</feature>
<feature type="DNA-binding region" description="HMG box 1" evidence="1">
    <location>
        <begin position="9"/>
        <end position="79"/>
    </location>
</feature>
<feature type="DNA-binding region" description="HMG box 2" evidence="1">
    <location>
        <begin position="93"/>
        <end position="161"/>
    </location>
</feature>
<feature type="region of interest" description="Disordered" evidence="2">
    <location>
        <begin position="80"/>
        <end position="100"/>
    </location>
</feature>
<feature type="compositionally biased region" description="Basic residues" evidence="2">
    <location>
        <begin position="80"/>
        <end position="89"/>
    </location>
</feature>
<feature type="sequence conflict" description="In Ref. 1; BAB24141." evidence="4" ref="1">
    <original>L</original>
    <variation>H</variation>
    <location>
        <position position="66"/>
    </location>
</feature>
<organism>
    <name type="scientific">Mus musculus</name>
    <name type="common">Mouse</name>
    <dbReference type="NCBI Taxonomy" id="10090"/>
    <lineage>
        <taxon>Eukaryota</taxon>
        <taxon>Metazoa</taxon>
        <taxon>Chordata</taxon>
        <taxon>Craniata</taxon>
        <taxon>Vertebrata</taxon>
        <taxon>Euteleostomi</taxon>
        <taxon>Mammalia</taxon>
        <taxon>Eutheria</taxon>
        <taxon>Euarchontoglires</taxon>
        <taxon>Glires</taxon>
        <taxon>Rodentia</taxon>
        <taxon>Myomorpha</taxon>
        <taxon>Muroidea</taxon>
        <taxon>Muridae</taxon>
        <taxon>Murinae</taxon>
        <taxon>Mus</taxon>
        <taxon>Mus</taxon>
    </lineage>
</organism>
<keyword id="KW-0158">Chromosome</keyword>
<keyword id="KW-0238">DNA-binding</keyword>
<keyword id="KW-0539">Nucleus</keyword>
<keyword id="KW-1185">Reference proteome</keyword>
<keyword id="KW-0677">Repeat</keyword>
<accession>Q6P8W9</accession>
<accession>Q9DAR4</accession>
<gene>
    <name type="primary">Hmgb4</name>
</gene>